<reference key="1">
    <citation type="submission" date="2008-06" db="EMBL/GenBank/DDBJ databases">
        <title>Complete sequence of Chlorobium phaeobacteroides BS1.</title>
        <authorList>
            <consortium name="US DOE Joint Genome Institute"/>
            <person name="Lucas S."/>
            <person name="Copeland A."/>
            <person name="Lapidus A."/>
            <person name="Glavina del Rio T."/>
            <person name="Dalin E."/>
            <person name="Tice H."/>
            <person name="Bruce D."/>
            <person name="Goodwin L."/>
            <person name="Pitluck S."/>
            <person name="Schmutz J."/>
            <person name="Larimer F."/>
            <person name="Land M."/>
            <person name="Hauser L."/>
            <person name="Kyrpides N."/>
            <person name="Ovchinnikova G."/>
            <person name="Li T."/>
            <person name="Liu Z."/>
            <person name="Zhao F."/>
            <person name="Overmann J."/>
            <person name="Bryant D.A."/>
            <person name="Richardson P."/>
        </authorList>
    </citation>
    <scope>NUCLEOTIDE SEQUENCE [LARGE SCALE GENOMIC DNA]</scope>
    <source>
        <strain>BS1</strain>
    </source>
</reference>
<protein>
    <recommendedName>
        <fullName evidence="1">Adenylate kinase</fullName>
        <shortName evidence="1">AK</shortName>
        <ecNumber evidence="1">2.7.4.3</ecNumber>
    </recommendedName>
    <alternativeName>
        <fullName evidence="1">ATP-AMP transphosphorylase</fullName>
    </alternativeName>
    <alternativeName>
        <fullName evidence="1">ATP:AMP phosphotransferase</fullName>
    </alternativeName>
    <alternativeName>
        <fullName evidence="1">Adenylate monophosphate kinase</fullName>
    </alternativeName>
</protein>
<feature type="chain" id="PRO_1000100544" description="Adenylate kinase">
    <location>
        <begin position="1"/>
        <end position="218"/>
    </location>
</feature>
<feature type="region of interest" description="NMP" evidence="1">
    <location>
        <begin position="30"/>
        <end position="59"/>
    </location>
</feature>
<feature type="region of interest" description="LID" evidence="1">
    <location>
        <begin position="122"/>
        <end position="159"/>
    </location>
</feature>
<feature type="binding site" evidence="1">
    <location>
        <begin position="10"/>
        <end position="15"/>
    </location>
    <ligand>
        <name>ATP</name>
        <dbReference type="ChEBI" id="CHEBI:30616"/>
    </ligand>
</feature>
<feature type="binding site" evidence="1">
    <location>
        <position position="31"/>
    </location>
    <ligand>
        <name>AMP</name>
        <dbReference type="ChEBI" id="CHEBI:456215"/>
    </ligand>
</feature>
<feature type="binding site" evidence="1">
    <location>
        <position position="36"/>
    </location>
    <ligand>
        <name>AMP</name>
        <dbReference type="ChEBI" id="CHEBI:456215"/>
    </ligand>
</feature>
<feature type="binding site" evidence="1">
    <location>
        <begin position="57"/>
        <end position="59"/>
    </location>
    <ligand>
        <name>AMP</name>
        <dbReference type="ChEBI" id="CHEBI:456215"/>
    </ligand>
</feature>
<feature type="binding site" evidence="1">
    <location>
        <begin position="85"/>
        <end position="88"/>
    </location>
    <ligand>
        <name>AMP</name>
        <dbReference type="ChEBI" id="CHEBI:456215"/>
    </ligand>
</feature>
<feature type="binding site" evidence="1">
    <location>
        <position position="92"/>
    </location>
    <ligand>
        <name>AMP</name>
        <dbReference type="ChEBI" id="CHEBI:456215"/>
    </ligand>
</feature>
<feature type="binding site" evidence="1">
    <location>
        <position position="123"/>
    </location>
    <ligand>
        <name>ATP</name>
        <dbReference type="ChEBI" id="CHEBI:30616"/>
    </ligand>
</feature>
<feature type="binding site" evidence="1">
    <location>
        <begin position="132"/>
        <end position="133"/>
    </location>
    <ligand>
        <name>ATP</name>
        <dbReference type="ChEBI" id="CHEBI:30616"/>
    </ligand>
</feature>
<feature type="binding site" evidence="1">
    <location>
        <position position="156"/>
    </location>
    <ligand>
        <name>AMP</name>
        <dbReference type="ChEBI" id="CHEBI:456215"/>
    </ligand>
</feature>
<feature type="binding site" evidence="1">
    <location>
        <position position="167"/>
    </location>
    <ligand>
        <name>AMP</name>
        <dbReference type="ChEBI" id="CHEBI:456215"/>
    </ligand>
</feature>
<feature type="binding site" evidence="1">
    <location>
        <position position="203"/>
    </location>
    <ligand>
        <name>ATP</name>
        <dbReference type="ChEBI" id="CHEBI:30616"/>
    </ligand>
</feature>
<gene>
    <name evidence="1" type="primary">adk</name>
    <name type="ordered locus">Cphamn1_1429</name>
</gene>
<organism>
    <name type="scientific">Chlorobium phaeobacteroides (strain BS1)</name>
    <dbReference type="NCBI Taxonomy" id="331678"/>
    <lineage>
        <taxon>Bacteria</taxon>
        <taxon>Pseudomonadati</taxon>
        <taxon>Chlorobiota</taxon>
        <taxon>Chlorobiia</taxon>
        <taxon>Chlorobiales</taxon>
        <taxon>Chlorobiaceae</taxon>
        <taxon>Chlorobium/Pelodictyon group</taxon>
        <taxon>Chlorobium</taxon>
    </lineage>
</organism>
<accession>B3EJF7</accession>
<sequence>MRIILLGAPGAGKGTQAQFISSTFSIPQISTGDMLRAAINEGTPLGLEAKKVMDAGKLVSDEIILGLVKERLSKSDCKNGCLFDGFPRTIAQADALKNDCIQIDHVIDIEVDDEEIIKRMSGRRVHPASGRTYHVLFNPPAKEGVDDITGDPLVQREDDCEETVRKRLDIYHKETAPLIEYYREYKKNGGPNALKFSTIKGTGSVESIKEKILNIFHN</sequence>
<keyword id="KW-0067">ATP-binding</keyword>
<keyword id="KW-0963">Cytoplasm</keyword>
<keyword id="KW-0418">Kinase</keyword>
<keyword id="KW-0545">Nucleotide biosynthesis</keyword>
<keyword id="KW-0547">Nucleotide-binding</keyword>
<keyword id="KW-0808">Transferase</keyword>
<comment type="function">
    <text evidence="1">Catalyzes the reversible transfer of the terminal phosphate group between ATP and AMP. Plays an important role in cellular energy homeostasis and in adenine nucleotide metabolism.</text>
</comment>
<comment type="catalytic activity">
    <reaction evidence="1">
        <text>AMP + ATP = 2 ADP</text>
        <dbReference type="Rhea" id="RHEA:12973"/>
        <dbReference type="ChEBI" id="CHEBI:30616"/>
        <dbReference type="ChEBI" id="CHEBI:456215"/>
        <dbReference type="ChEBI" id="CHEBI:456216"/>
        <dbReference type="EC" id="2.7.4.3"/>
    </reaction>
</comment>
<comment type="pathway">
    <text evidence="1">Purine metabolism; AMP biosynthesis via salvage pathway; AMP from ADP: step 1/1.</text>
</comment>
<comment type="subunit">
    <text evidence="1">Monomer.</text>
</comment>
<comment type="subcellular location">
    <subcellularLocation>
        <location evidence="1">Cytoplasm</location>
    </subcellularLocation>
</comment>
<comment type="domain">
    <text evidence="1">Consists of three domains, a large central CORE domain and two small peripheral domains, NMPbind and LID, which undergo movements during catalysis. The LID domain closes over the site of phosphoryl transfer upon ATP binding. Assembling and dissambling the active center during each catalytic cycle provides an effective means to prevent ATP hydrolysis.</text>
</comment>
<comment type="similarity">
    <text evidence="1">Belongs to the adenylate kinase family.</text>
</comment>
<evidence type="ECO:0000255" key="1">
    <source>
        <dbReference type="HAMAP-Rule" id="MF_00235"/>
    </source>
</evidence>
<proteinExistence type="inferred from homology"/>
<dbReference type="EC" id="2.7.4.3" evidence="1"/>
<dbReference type="EMBL" id="CP001101">
    <property type="protein sequence ID" value="ACE04357.1"/>
    <property type="molecule type" value="Genomic_DNA"/>
</dbReference>
<dbReference type="SMR" id="B3EJF7"/>
<dbReference type="STRING" id="331678.Cphamn1_1429"/>
<dbReference type="KEGG" id="cpb:Cphamn1_1429"/>
<dbReference type="eggNOG" id="COG0563">
    <property type="taxonomic scope" value="Bacteria"/>
</dbReference>
<dbReference type="HOGENOM" id="CLU_032354_1_2_10"/>
<dbReference type="OrthoDB" id="9805030at2"/>
<dbReference type="UniPathway" id="UPA00588">
    <property type="reaction ID" value="UER00649"/>
</dbReference>
<dbReference type="GO" id="GO:0005737">
    <property type="term" value="C:cytoplasm"/>
    <property type="evidence" value="ECO:0007669"/>
    <property type="project" value="UniProtKB-SubCell"/>
</dbReference>
<dbReference type="GO" id="GO:0004017">
    <property type="term" value="F:adenylate kinase activity"/>
    <property type="evidence" value="ECO:0007669"/>
    <property type="project" value="UniProtKB-UniRule"/>
</dbReference>
<dbReference type="GO" id="GO:0005524">
    <property type="term" value="F:ATP binding"/>
    <property type="evidence" value="ECO:0007669"/>
    <property type="project" value="UniProtKB-UniRule"/>
</dbReference>
<dbReference type="GO" id="GO:0044209">
    <property type="term" value="P:AMP salvage"/>
    <property type="evidence" value="ECO:0007669"/>
    <property type="project" value="UniProtKB-UniRule"/>
</dbReference>
<dbReference type="CDD" id="cd01428">
    <property type="entry name" value="ADK"/>
    <property type="match status" value="1"/>
</dbReference>
<dbReference type="FunFam" id="3.40.50.300:FF:000106">
    <property type="entry name" value="Adenylate kinase mitochondrial"/>
    <property type="match status" value="1"/>
</dbReference>
<dbReference type="Gene3D" id="3.40.50.300">
    <property type="entry name" value="P-loop containing nucleotide triphosphate hydrolases"/>
    <property type="match status" value="1"/>
</dbReference>
<dbReference type="HAMAP" id="MF_00235">
    <property type="entry name" value="Adenylate_kinase_Adk"/>
    <property type="match status" value="1"/>
</dbReference>
<dbReference type="InterPro" id="IPR006259">
    <property type="entry name" value="Adenyl_kin_sub"/>
</dbReference>
<dbReference type="InterPro" id="IPR000850">
    <property type="entry name" value="Adenylat/UMP-CMP_kin"/>
</dbReference>
<dbReference type="InterPro" id="IPR033690">
    <property type="entry name" value="Adenylat_kinase_CS"/>
</dbReference>
<dbReference type="InterPro" id="IPR007862">
    <property type="entry name" value="Adenylate_kinase_lid-dom"/>
</dbReference>
<dbReference type="InterPro" id="IPR027417">
    <property type="entry name" value="P-loop_NTPase"/>
</dbReference>
<dbReference type="NCBIfam" id="TIGR01351">
    <property type="entry name" value="adk"/>
    <property type="match status" value="1"/>
</dbReference>
<dbReference type="NCBIfam" id="NF001379">
    <property type="entry name" value="PRK00279.1-1"/>
    <property type="match status" value="1"/>
</dbReference>
<dbReference type="NCBIfam" id="NF001380">
    <property type="entry name" value="PRK00279.1-2"/>
    <property type="match status" value="1"/>
</dbReference>
<dbReference type="NCBIfam" id="NF001381">
    <property type="entry name" value="PRK00279.1-3"/>
    <property type="match status" value="1"/>
</dbReference>
<dbReference type="NCBIfam" id="NF011100">
    <property type="entry name" value="PRK14527.1"/>
    <property type="match status" value="1"/>
</dbReference>
<dbReference type="PANTHER" id="PTHR23359">
    <property type="entry name" value="NUCLEOTIDE KINASE"/>
    <property type="match status" value="1"/>
</dbReference>
<dbReference type="Pfam" id="PF00406">
    <property type="entry name" value="ADK"/>
    <property type="match status" value="1"/>
</dbReference>
<dbReference type="Pfam" id="PF05191">
    <property type="entry name" value="ADK_lid"/>
    <property type="match status" value="1"/>
</dbReference>
<dbReference type="PRINTS" id="PR00094">
    <property type="entry name" value="ADENYLTKNASE"/>
</dbReference>
<dbReference type="SUPFAM" id="SSF52540">
    <property type="entry name" value="P-loop containing nucleoside triphosphate hydrolases"/>
    <property type="match status" value="1"/>
</dbReference>
<dbReference type="PROSITE" id="PS00113">
    <property type="entry name" value="ADENYLATE_KINASE"/>
    <property type="match status" value="1"/>
</dbReference>
<name>KAD_CHLPB</name>